<evidence type="ECO:0000255" key="1">
    <source>
        <dbReference type="PROSITE-ProRule" id="PRU00303"/>
    </source>
</evidence>
<evidence type="ECO:0000305" key="2"/>
<accession>Q5HJR9</accession>
<reference key="1">
    <citation type="journal article" date="2005" name="J. Bacteriol.">
        <title>Insights on evolution of virulence and resistance from the complete genome analysis of an early methicillin-resistant Staphylococcus aureus strain and a biofilm-producing methicillin-resistant Staphylococcus epidermidis strain.</title>
        <authorList>
            <person name="Gill S.R."/>
            <person name="Fouts D.E."/>
            <person name="Archer G.L."/>
            <person name="Mongodin E.F."/>
            <person name="DeBoy R.T."/>
            <person name="Ravel J."/>
            <person name="Paulsen I.T."/>
            <person name="Kolonay J.F."/>
            <person name="Brinkac L.M."/>
            <person name="Beanan M.J."/>
            <person name="Dodson R.J."/>
            <person name="Daugherty S.C."/>
            <person name="Madupu R."/>
            <person name="Angiuoli S.V."/>
            <person name="Durkin A.S."/>
            <person name="Haft D.H."/>
            <person name="Vamathevan J.J."/>
            <person name="Khouri H."/>
            <person name="Utterback T.R."/>
            <person name="Lee C."/>
            <person name="Dimitrov G."/>
            <person name="Jiang L."/>
            <person name="Qin H."/>
            <person name="Weidman J."/>
            <person name="Tran K."/>
            <person name="Kang K.H."/>
            <person name="Hance I.R."/>
            <person name="Nelson K.E."/>
            <person name="Fraser C.M."/>
        </authorList>
    </citation>
    <scope>NUCLEOTIDE SEQUENCE [LARGE SCALE GENOMIC DNA]</scope>
    <source>
        <strain>COL</strain>
    </source>
</reference>
<comment type="subcellular location">
    <subcellularLocation>
        <location evidence="1">Cell membrane</location>
        <topology evidence="1">Lipid-anchor</topology>
    </subcellularLocation>
</comment>
<comment type="similarity">
    <text evidence="2">Belongs to the staphylococcal tandem lipoprotein family.</text>
</comment>
<dbReference type="EMBL" id="CP000046">
    <property type="protein sequence ID" value="AAW38727.1"/>
    <property type="molecule type" value="Genomic_DNA"/>
</dbReference>
<dbReference type="RefSeq" id="WP_000826311.1">
    <property type="nucleotide sequence ID" value="NC_002951.2"/>
</dbReference>
<dbReference type="SMR" id="Q5HJR9"/>
<dbReference type="KEGG" id="sac:SACOL0083"/>
<dbReference type="HOGENOM" id="CLU_071589_0_1_9"/>
<dbReference type="Proteomes" id="UP000000530">
    <property type="component" value="Chromosome"/>
</dbReference>
<dbReference type="GO" id="GO:0005886">
    <property type="term" value="C:plasma membrane"/>
    <property type="evidence" value="ECO:0007669"/>
    <property type="project" value="UniProtKB-SubCell"/>
</dbReference>
<dbReference type="Gene3D" id="2.50.20.40">
    <property type="match status" value="1"/>
</dbReference>
<dbReference type="InterPro" id="IPR007595">
    <property type="entry name" value="Csa"/>
</dbReference>
<dbReference type="InterPro" id="IPR038641">
    <property type="entry name" value="Csa_sf"/>
</dbReference>
<dbReference type="NCBIfam" id="TIGR01742">
    <property type="entry name" value="SA_tandem_lipo"/>
    <property type="match status" value="1"/>
</dbReference>
<dbReference type="Pfam" id="PF04507">
    <property type="entry name" value="DUF576"/>
    <property type="match status" value="1"/>
</dbReference>
<dbReference type="PROSITE" id="PS51257">
    <property type="entry name" value="PROKAR_LIPOPROTEIN"/>
    <property type="match status" value="1"/>
</dbReference>
<organism>
    <name type="scientific">Staphylococcus aureus (strain COL)</name>
    <dbReference type="NCBI Taxonomy" id="93062"/>
    <lineage>
        <taxon>Bacteria</taxon>
        <taxon>Bacillati</taxon>
        <taxon>Bacillota</taxon>
        <taxon>Bacilli</taxon>
        <taxon>Bacillales</taxon>
        <taxon>Staphylococcaceae</taxon>
        <taxon>Staphylococcus</taxon>
    </lineage>
</organism>
<gene>
    <name type="ordered locus">SACOL0083</name>
</gene>
<proteinExistence type="inferred from homology"/>
<sequence length="255" mass="29400">MKRLNKLVLYISFLILVISFTAGCGIGKEAEVKKSFEKTLSMYPIKNLEDLYDKEGYRDDEFDKNDKGTWIIGSEMVVQPKGERMKSKGMVLYMNRNTKTTTGKYIVSETLHDEDGRPKSKDKEYPVKMVDNKIIPTKGIKDENIKKEIENFKFFAQYGSFKDLSKYKDGDISYNPEVPSYSAKYQLTNDDYNVKQLRKRYKIPTNKAPKLLLKGSGDLKGSSVGYKDIEFTFVEKKGENTFFTDSLHLEPSEDK</sequence>
<protein>
    <recommendedName>
        <fullName>Uncharacterized lipoprotein SACOL0083</fullName>
    </recommendedName>
</protein>
<name>Y083_STAAC</name>
<keyword id="KW-1003">Cell membrane</keyword>
<keyword id="KW-0449">Lipoprotein</keyword>
<keyword id="KW-0472">Membrane</keyword>
<keyword id="KW-0564">Palmitate</keyword>
<keyword id="KW-0732">Signal</keyword>
<feature type="signal peptide" evidence="1">
    <location>
        <begin position="1"/>
        <end position="23"/>
    </location>
</feature>
<feature type="chain" id="PRO_0000282104" description="Uncharacterized lipoprotein SACOL0083">
    <location>
        <begin position="24"/>
        <end position="255"/>
    </location>
</feature>
<feature type="lipid moiety-binding region" description="N-palmitoyl cysteine" evidence="1">
    <location>
        <position position="24"/>
    </location>
</feature>
<feature type="lipid moiety-binding region" description="S-diacylglycerol cysteine" evidence="1">
    <location>
        <position position="24"/>
    </location>
</feature>